<comment type="function">
    <text evidence="2 3 4 5">Required for elongation of meiosis I spindle. Critical for ovulation, meiotic progression in oocytes and female courtship behavior, including their postmating changes. Regulates female meiosis by controlling calcineurin activity in the germline. Has a role in calcium signaling during egg activation; bcd mRNA polyadenylation and translation in the oocyte.</text>
</comment>
<comment type="subunit">
    <text evidence="3 5">Interacts with Pp2B-14D, CanA-14F and CanB2.</text>
</comment>
<comment type="tissue specificity">
    <text evidence="2">Expressed in central nervous system of the third instar larvae, with a relatively intense signal in the brain and weak signals in the ventral ganglion. Relatively low, but ubiquitous expression level is observed in leg and wing imaginal disks, no signal is detected in the eye-antennal disks. Expressed in all neurons in the adult brain.</text>
</comment>
<comment type="developmental stage">
    <text evidence="2">Expressed both maternally and zygotically.</text>
</comment>
<comment type="PTM">
    <text evidence="5">Phosphorylation at Ser-215 and Ser-219 is essential for calcineurin activation and completion of female meiosis. Sgg is required for phosphorylation of Ser-215 in activated eggs. Ser-100, Thr-102 and Ser-219 are highly phosphorylated in both ovaries and activated eggs; however, phosphorylation at Ser-100 or Thr-102 is not required for sra function in completion of female meiosis.</text>
</comment>
<comment type="disruption phenotype">
    <text evidence="2">Flies exhibit spontaneous ovulation in virgins, female sterility with impaired meiotic progression (eggs are arrested at anaphase of meiosis I, they fail to fully polyadenylate and translate bicoid mRNA and the male pronucleus fails to mature), and compromised postmating responses with lower ovulation level, higher remating rate, and shorter period for restoration of receptivity.</text>
</comment>
<comment type="similarity">
    <text evidence="6">Belongs to the RCAN family.</text>
</comment>
<organism>
    <name type="scientific">Drosophila melanogaster</name>
    <name type="common">Fruit fly</name>
    <dbReference type="NCBI Taxonomy" id="7227"/>
    <lineage>
        <taxon>Eukaryota</taxon>
        <taxon>Metazoa</taxon>
        <taxon>Ecdysozoa</taxon>
        <taxon>Arthropoda</taxon>
        <taxon>Hexapoda</taxon>
        <taxon>Insecta</taxon>
        <taxon>Pterygota</taxon>
        <taxon>Neoptera</taxon>
        <taxon>Endopterygota</taxon>
        <taxon>Diptera</taxon>
        <taxon>Brachycera</taxon>
        <taxon>Muscomorpha</taxon>
        <taxon>Ephydroidea</taxon>
        <taxon>Drosophilidae</taxon>
        <taxon>Drosophila</taxon>
        <taxon>Sophophora</taxon>
    </lineage>
</organism>
<sequence>MSDAAKSNNNASADAPDPTTPDATGEADAANAATPTTPRGNHNNNNSANGRSKNKLKSTQNSSGGGSIDKLSPDQDIFINAADGLPNQHPSLPKEGDVDSDTEPEVDADSFDDLPTSIIVTNIHSEVFANPELKHAMEELFRTFSESATFQWLRSFRRLRVNYDNAIAAANARIKLHQYEFNKKTVITCYFAQPVTPVSNKNLQPPAPVKQFLISPPASPPAGWEPREEGEPLVNHDLLAALASLTPGESHELHPQSEDQPAIIVHTAMLAETGPGLQVKAPIVQTKCPERA</sequence>
<accession>Q9XZL8</accession>
<accession>Q9V391</accession>
<gene>
    <name type="primary">sra</name>
    <name type="synonym">nla</name>
    <name type="ORF">CG6072</name>
</gene>
<feature type="chain" id="PRO_0000211422" description="Protein sarah">
    <location>
        <begin position="1"/>
        <end position="292"/>
    </location>
</feature>
<feature type="region of interest" description="Disordered" evidence="1">
    <location>
        <begin position="1"/>
        <end position="111"/>
    </location>
</feature>
<feature type="compositionally biased region" description="Low complexity" evidence="1">
    <location>
        <begin position="1"/>
        <end position="51"/>
    </location>
</feature>
<feature type="compositionally biased region" description="Acidic residues" evidence="1">
    <location>
        <begin position="98"/>
        <end position="111"/>
    </location>
</feature>
<feature type="modified residue" description="Phosphoserine" evidence="5">
    <location>
        <position position="67"/>
    </location>
</feature>
<feature type="modified residue" description="Phosphoserine" evidence="5">
    <location>
        <position position="72"/>
    </location>
</feature>
<feature type="modified residue" description="Phosphoserine" evidence="5">
    <location>
        <position position="100"/>
    </location>
</feature>
<feature type="modified residue" description="Phosphothreonine" evidence="5">
    <location>
        <position position="102"/>
    </location>
</feature>
<feature type="modified residue" description="Phosphothreonine" evidence="5">
    <location>
        <position position="196"/>
    </location>
</feature>
<feature type="modified residue" description="Phosphoserine" evidence="5">
    <location>
        <position position="215"/>
    </location>
</feature>
<feature type="modified residue" description="Phosphoserine" evidence="5">
    <location>
        <position position="219"/>
    </location>
</feature>
<feature type="modified residue" description="Phosphothreonine" evidence="5">
    <location>
        <position position="246"/>
    </location>
</feature>
<feature type="mutagenesis site" description="No effect on function in completion of female meiosis." evidence="5">
    <original>S</original>
    <variation>A</variation>
    <location>
        <position position="67"/>
    </location>
</feature>
<feature type="mutagenesis site" description="No effect on function in completion of female meiosis." evidence="5">
    <original>S</original>
    <variation>A</variation>
    <location>
        <position position="72"/>
    </location>
</feature>
<feature type="mutagenesis site" description="No effect on function in completion of female meiosis." evidence="5">
    <original>S</original>
    <variation>A</variation>
    <location>
        <position position="100"/>
    </location>
</feature>
<feature type="mutagenesis site" description="No effect on function in completion of female meiosis." evidence="5">
    <original>T</original>
    <variation>A</variation>
    <location>
        <position position="102"/>
    </location>
</feature>
<feature type="mutagenesis site" description="No effect on function in completion of female meiosis." evidence="5">
    <original>T</original>
    <variation>A</variation>
    <location>
        <position position="196"/>
    </location>
</feature>
<feature type="mutagenesis site" description="No effect on function in completion of female meiosis." evidence="5">
    <original>S</original>
    <variation>A</variation>
    <location>
        <position position="199"/>
    </location>
</feature>
<feature type="mutagenesis site" description="Loss of function in completion of female meiosis. Loss of function in completion of female meiosis; when associated with A-219." evidence="5">
    <original>S</original>
    <variation>A</variation>
    <location>
        <position position="215"/>
    </location>
</feature>
<feature type="mutagenesis site" description="Loss of function in completion of female meiosis." evidence="5">
    <original>S</original>
    <variation>E</variation>
    <variation>D</variation>
    <location>
        <position position="215"/>
    </location>
</feature>
<feature type="mutagenesis site" description="Impairs function in completion of female meiosis. Loss of function in completion of female meiosis; when associated with A-215." evidence="5">
    <original>S</original>
    <variation>A</variation>
    <location>
        <position position="219"/>
    </location>
</feature>
<feature type="mutagenesis site" description="Slightly impairs function in completion of female meiosis." evidence="5">
    <original>S</original>
    <variation>E</variation>
    <variation>D</variation>
    <location>
        <position position="219"/>
    </location>
</feature>
<feature type="mutagenesis site" description="No effect on function in completion of female meiosis." evidence="5">
    <original>T</original>
    <variation>A</variation>
    <location>
        <position position="246"/>
    </location>
</feature>
<reference key="1">
    <citation type="submission" date="1999-04" db="EMBL/GenBank/DDBJ databases">
        <title>Gene required for elongation of meiosis I spindle in Drosophila females.</title>
        <authorList>
            <person name="McCormick A.V."/>
            <person name="Goldberg M.L."/>
        </authorList>
    </citation>
    <scope>NUCLEOTIDE SEQUENCE [MRNA]</scope>
</reference>
<reference key="2">
    <citation type="journal article" date="2000" name="Science">
        <title>The genome sequence of Drosophila melanogaster.</title>
        <authorList>
            <person name="Adams M.D."/>
            <person name="Celniker S.E."/>
            <person name="Holt R.A."/>
            <person name="Evans C.A."/>
            <person name="Gocayne J.D."/>
            <person name="Amanatides P.G."/>
            <person name="Scherer S.E."/>
            <person name="Li P.W."/>
            <person name="Hoskins R.A."/>
            <person name="Galle R.F."/>
            <person name="George R.A."/>
            <person name="Lewis S.E."/>
            <person name="Richards S."/>
            <person name="Ashburner M."/>
            <person name="Henderson S.N."/>
            <person name="Sutton G.G."/>
            <person name="Wortman J.R."/>
            <person name="Yandell M.D."/>
            <person name="Zhang Q."/>
            <person name="Chen L.X."/>
            <person name="Brandon R.C."/>
            <person name="Rogers Y.-H.C."/>
            <person name="Blazej R.G."/>
            <person name="Champe M."/>
            <person name="Pfeiffer B.D."/>
            <person name="Wan K.H."/>
            <person name="Doyle C."/>
            <person name="Baxter E.G."/>
            <person name="Helt G."/>
            <person name="Nelson C.R."/>
            <person name="Miklos G.L.G."/>
            <person name="Abril J.F."/>
            <person name="Agbayani A."/>
            <person name="An H.-J."/>
            <person name="Andrews-Pfannkoch C."/>
            <person name="Baldwin D."/>
            <person name="Ballew R.M."/>
            <person name="Basu A."/>
            <person name="Baxendale J."/>
            <person name="Bayraktaroglu L."/>
            <person name="Beasley E.M."/>
            <person name="Beeson K.Y."/>
            <person name="Benos P.V."/>
            <person name="Berman B.P."/>
            <person name="Bhandari D."/>
            <person name="Bolshakov S."/>
            <person name="Borkova D."/>
            <person name="Botchan M.R."/>
            <person name="Bouck J."/>
            <person name="Brokstein P."/>
            <person name="Brottier P."/>
            <person name="Burtis K.C."/>
            <person name="Busam D.A."/>
            <person name="Butler H."/>
            <person name="Cadieu E."/>
            <person name="Center A."/>
            <person name="Chandra I."/>
            <person name="Cherry J.M."/>
            <person name="Cawley S."/>
            <person name="Dahlke C."/>
            <person name="Davenport L.B."/>
            <person name="Davies P."/>
            <person name="de Pablos B."/>
            <person name="Delcher A."/>
            <person name="Deng Z."/>
            <person name="Mays A.D."/>
            <person name="Dew I."/>
            <person name="Dietz S.M."/>
            <person name="Dodson K."/>
            <person name="Doup L.E."/>
            <person name="Downes M."/>
            <person name="Dugan-Rocha S."/>
            <person name="Dunkov B.C."/>
            <person name="Dunn P."/>
            <person name="Durbin K.J."/>
            <person name="Evangelista C.C."/>
            <person name="Ferraz C."/>
            <person name="Ferriera S."/>
            <person name="Fleischmann W."/>
            <person name="Fosler C."/>
            <person name="Gabrielian A.E."/>
            <person name="Garg N.S."/>
            <person name="Gelbart W.M."/>
            <person name="Glasser K."/>
            <person name="Glodek A."/>
            <person name="Gong F."/>
            <person name="Gorrell J.H."/>
            <person name="Gu Z."/>
            <person name="Guan P."/>
            <person name="Harris M."/>
            <person name="Harris N.L."/>
            <person name="Harvey D.A."/>
            <person name="Heiman T.J."/>
            <person name="Hernandez J.R."/>
            <person name="Houck J."/>
            <person name="Hostin D."/>
            <person name="Houston K.A."/>
            <person name="Howland T.J."/>
            <person name="Wei M.-H."/>
            <person name="Ibegwam C."/>
            <person name="Jalali M."/>
            <person name="Kalush F."/>
            <person name="Karpen G.H."/>
            <person name="Ke Z."/>
            <person name="Kennison J.A."/>
            <person name="Ketchum K.A."/>
            <person name="Kimmel B.E."/>
            <person name="Kodira C.D."/>
            <person name="Kraft C.L."/>
            <person name="Kravitz S."/>
            <person name="Kulp D."/>
            <person name="Lai Z."/>
            <person name="Lasko P."/>
            <person name="Lei Y."/>
            <person name="Levitsky A.A."/>
            <person name="Li J.H."/>
            <person name="Li Z."/>
            <person name="Liang Y."/>
            <person name="Lin X."/>
            <person name="Liu X."/>
            <person name="Mattei B."/>
            <person name="McIntosh T.C."/>
            <person name="McLeod M.P."/>
            <person name="McPherson D."/>
            <person name="Merkulov G."/>
            <person name="Milshina N.V."/>
            <person name="Mobarry C."/>
            <person name="Morris J."/>
            <person name="Moshrefi A."/>
            <person name="Mount S.M."/>
            <person name="Moy M."/>
            <person name="Murphy B."/>
            <person name="Murphy L."/>
            <person name="Muzny D.M."/>
            <person name="Nelson D.L."/>
            <person name="Nelson D.R."/>
            <person name="Nelson K.A."/>
            <person name="Nixon K."/>
            <person name="Nusskern D.R."/>
            <person name="Pacleb J.M."/>
            <person name="Palazzolo M."/>
            <person name="Pittman G.S."/>
            <person name="Pan S."/>
            <person name="Pollard J."/>
            <person name="Puri V."/>
            <person name="Reese M.G."/>
            <person name="Reinert K."/>
            <person name="Remington K."/>
            <person name="Saunders R.D.C."/>
            <person name="Scheeler F."/>
            <person name="Shen H."/>
            <person name="Shue B.C."/>
            <person name="Siden-Kiamos I."/>
            <person name="Simpson M."/>
            <person name="Skupski M.P."/>
            <person name="Smith T.J."/>
            <person name="Spier E."/>
            <person name="Spradling A.C."/>
            <person name="Stapleton M."/>
            <person name="Strong R."/>
            <person name="Sun E."/>
            <person name="Svirskas R."/>
            <person name="Tector C."/>
            <person name="Turner R."/>
            <person name="Venter E."/>
            <person name="Wang A.H."/>
            <person name="Wang X."/>
            <person name="Wang Z.-Y."/>
            <person name="Wassarman D.A."/>
            <person name="Weinstock G.M."/>
            <person name="Weissenbach J."/>
            <person name="Williams S.M."/>
            <person name="Woodage T."/>
            <person name="Worley K.C."/>
            <person name="Wu D."/>
            <person name="Yang S."/>
            <person name="Yao Q.A."/>
            <person name="Ye J."/>
            <person name="Yeh R.-F."/>
            <person name="Zaveri J.S."/>
            <person name="Zhan M."/>
            <person name="Zhang G."/>
            <person name="Zhao Q."/>
            <person name="Zheng L."/>
            <person name="Zheng X.H."/>
            <person name="Zhong F.N."/>
            <person name="Zhong W."/>
            <person name="Zhou X."/>
            <person name="Zhu S.C."/>
            <person name="Zhu X."/>
            <person name="Smith H.O."/>
            <person name="Gibbs R.A."/>
            <person name="Myers E.W."/>
            <person name="Rubin G.M."/>
            <person name="Venter J.C."/>
        </authorList>
    </citation>
    <scope>NUCLEOTIDE SEQUENCE [LARGE SCALE GENOMIC DNA]</scope>
    <source>
        <strain>Berkeley</strain>
    </source>
</reference>
<reference key="3">
    <citation type="journal article" date="2002" name="Genome Biol.">
        <title>Annotation of the Drosophila melanogaster euchromatic genome: a systematic review.</title>
        <authorList>
            <person name="Misra S."/>
            <person name="Crosby M.A."/>
            <person name="Mungall C.J."/>
            <person name="Matthews B.B."/>
            <person name="Campbell K.S."/>
            <person name="Hradecky P."/>
            <person name="Huang Y."/>
            <person name="Kaminker J.S."/>
            <person name="Millburn G.H."/>
            <person name="Prochnik S.E."/>
            <person name="Smith C.D."/>
            <person name="Tupy J.L."/>
            <person name="Whitfield E.J."/>
            <person name="Bayraktaroglu L."/>
            <person name="Berman B.P."/>
            <person name="Bettencourt B.R."/>
            <person name="Celniker S.E."/>
            <person name="de Grey A.D.N.J."/>
            <person name="Drysdale R.A."/>
            <person name="Harris N.L."/>
            <person name="Richter J."/>
            <person name="Russo S."/>
            <person name="Schroeder A.J."/>
            <person name="Shu S.Q."/>
            <person name="Stapleton M."/>
            <person name="Yamada C."/>
            <person name="Ashburner M."/>
            <person name="Gelbart W.M."/>
            <person name="Rubin G.M."/>
            <person name="Lewis S.E."/>
        </authorList>
    </citation>
    <scope>GENOME REANNOTATION</scope>
    <source>
        <strain>Berkeley</strain>
    </source>
</reference>
<reference key="4">
    <citation type="journal article" date="2002" name="Genome Biol.">
        <title>A Drosophila full-length cDNA resource.</title>
        <authorList>
            <person name="Stapleton M."/>
            <person name="Carlson J.W."/>
            <person name="Brokstein P."/>
            <person name="Yu C."/>
            <person name="Champe M."/>
            <person name="George R.A."/>
            <person name="Guarin H."/>
            <person name="Kronmiller B."/>
            <person name="Pacleb J.M."/>
            <person name="Park S."/>
            <person name="Wan K.H."/>
            <person name="Rubin G.M."/>
            <person name="Celniker S.E."/>
        </authorList>
    </citation>
    <scope>NUCLEOTIDE SEQUENCE [LARGE SCALE MRNA]</scope>
    <source>
        <strain>Berkeley</strain>
        <tissue>Embryo</tissue>
    </source>
</reference>
<reference key="5">
    <citation type="journal article" date="2004" name="Genetics">
        <title>Expression level of sarah, a homolog of DSCR1, is critical for ovulation and female courtship behavior in Drosophila melanogaster.</title>
        <authorList>
            <person name="Ejima A."/>
            <person name="Tsuda M."/>
            <person name="Takeo S."/>
            <person name="Ishii K."/>
            <person name="Matsuo T."/>
            <person name="Aigaki T."/>
        </authorList>
    </citation>
    <scope>FUNCTION</scope>
    <scope>TISSUE SPECIFICITY</scope>
    <scope>DEVELOPMENTAL STAGE</scope>
    <scope>DISRUPTION PHENOTYPE</scope>
</reference>
<reference key="6">
    <citation type="journal article" date="2006" name="Curr. Biol.">
        <title>The calcineurin regulator sra plays an essential role in female meiosis in Drosophila.</title>
        <authorList>
            <person name="Takeo S."/>
            <person name="Tsuda M."/>
            <person name="Akahori S."/>
            <person name="Matsuo T."/>
            <person name="Aigaki T."/>
        </authorList>
    </citation>
    <scope>FUNCTION</scope>
    <scope>INTERACTION WITH PP2B-14D</scope>
</reference>
<reference key="7">
    <citation type="journal article" date="2006" name="Curr. Biol.">
        <title>The Drosophila calcipressin sarah is required for several aspects of egg activation.</title>
        <authorList>
            <person name="Horner V.L."/>
            <person name="Czank A."/>
            <person name="Jang J.K."/>
            <person name="Singh N."/>
            <person name="Williams B.C."/>
            <person name="Puro J."/>
            <person name="Kubli E."/>
            <person name="Hanes S.D."/>
            <person name="McKim K.S."/>
            <person name="Wolfner M.F."/>
            <person name="Goldberg M.L."/>
        </authorList>
    </citation>
    <scope>FUNCTION</scope>
</reference>
<reference key="8">
    <citation type="journal article" date="2012" name="Proc. Natl. Acad. Sci. U.S.A.">
        <title>Shaggy/glycogen synthase kinase 3beta and phosphorylation of Sarah/regulator of calcineurin are essential for completion of Drosophila female meiosis.</title>
        <authorList>
            <person name="Takeo S."/>
            <person name="Swanson S.K."/>
            <person name="Nandanan K."/>
            <person name="Nakai Y."/>
            <person name="Aigaki T."/>
            <person name="Washburn M.P."/>
            <person name="Florens L."/>
            <person name="Hawley R.S."/>
        </authorList>
    </citation>
    <scope>FUNCTION</scope>
    <scope>INTERACTION WITH CANA-14F; CANB2 AND PP2B-14D</scope>
    <scope>PHOSPHORYLATION AT SER-67; SER-72; SER-100; THR-102; THR-196; SER-215; SER-219 AND THR-246</scope>
    <scope>MUTAGENESIS OF SER-67; SER-72; SER-100; THR-102; THR-196; SER-199; SER-215; SER-219 AND THR-246</scope>
</reference>
<name>SRA_DROME</name>
<proteinExistence type="evidence at protein level"/>
<evidence type="ECO:0000256" key="1">
    <source>
        <dbReference type="SAM" id="MobiDB-lite"/>
    </source>
</evidence>
<evidence type="ECO:0000269" key="2">
    <source>
    </source>
</evidence>
<evidence type="ECO:0000269" key="3">
    <source>
    </source>
</evidence>
<evidence type="ECO:0000269" key="4">
    <source>
    </source>
</evidence>
<evidence type="ECO:0000269" key="5">
    <source>
    </source>
</evidence>
<evidence type="ECO:0000305" key="6"/>
<protein>
    <recommendedName>
        <fullName>Protein sarah</fullName>
    </recommendedName>
    <alternativeName>
        <fullName>Protein nebula</fullName>
    </alternativeName>
</protein>
<keyword id="KW-0085">Behavior</keyword>
<keyword id="KW-0106">Calcium</keyword>
<keyword id="KW-0131">Cell cycle</keyword>
<keyword id="KW-0217">Developmental protein</keyword>
<keyword id="KW-0221">Differentiation</keyword>
<keyword id="KW-0469">Meiosis</keyword>
<keyword id="KW-0896">Oogenesis</keyword>
<keyword id="KW-0597">Phosphoprotein</keyword>
<keyword id="KW-1185">Reference proteome</keyword>
<dbReference type="EMBL" id="AF147700">
    <property type="protein sequence ID" value="AAD33987.1"/>
    <property type="molecule type" value="mRNA"/>
</dbReference>
<dbReference type="EMBL" id="AE014297">
    <property type="protein sequence ID" value="AAF55285.1"/>
    <property type="molecule type" value="Genomic_DNA"/>
</dbReference>
<dbReference type="EMBL" id="AY061194">
    <property type="protein sequence ID" value="AAL28742.1"/>
    <property type="molecule type" value="mRNA"/>
</dbReference>
<dbReference type="RefSeq" id="NP_001287361.1">
    <property type="nucleotide sequence ID" value="NM_001300432.1"/>
</dbReference>
<dbReference type="RefSeq" id="NP_524378.1">
    <property type="nucleotide sequence ID" value="NM_079654.3"/>
</dbReference>
<dbReference type="SMR" id="Q9XZL8"/>
<dbReference type="BioGRID" id="70782">
    <property type="interactions" value="7"/>
</dbReference>
<dbReference type="FunCoup" id="Q9XZL8">
    <property type="interactions" value="999"/>
</dbReference>
<dbReference type="IntAct" id="Q9XZL8">
    <property type="interactions" value="3"/>
</dbReference>
<dbReference type="STRING" id="7227.FBpp0310844"/>
<dbReference type="GlyGen" id="Q9XZL8">
    <property type="glycosylation" value="1 site"/>
</dbReference>
<dbReference type="iPTMnet" id="Q9XZL8"/>
<dbReference type="PaxDb" id="7227-FBpp0082709"/>
<dbReference type="DNASU" id="47384"/>
<dbReference type="EnsemblMetazoa" id="FBtr0083255">
    <property type="protein sequence ID" value="FBpp0082709"/>
    <property type="gene ID" value="FBgn0086370"/>
</dbReference>
<dbReference type="EnsemblMetazoa" id="FBtr0344473">
    <property type="protein sequence ID" value="FBpp0310844"/>
    <property type="gene ID" value="FBgn0086370"/>
</dbReference>
<dbReference type="GeneID" id="47384"/>
<dbReference type="KEGG" id="dme:Dmel_CG6072"/>
<dbReference type="AGR" id="FB:FBgn0086370"/>
<dbReference type="CTD" id="47384"/>
<dbReference type="FlyBase" id="FBgn0086370">
    <property type="gene designation" value="sra"/>
</dbReference>
<dbReference type="VEuPathDB" id="VectorBase:FBgn0086370"/>
<dbReference type="eggNOG" id="KOG4019">
    <property type="taxonomic scope" value="Eukaryota"/>
</dbReference>
<dbReference type="GeneTree" id="ENSGT00940000170734"/>
<dbReference type="HOGENOM" id="CLU_076190_1_0_1"/>
<dbReference type="InParanoid" id="Q9XZL8"/>
<dbReference type="OMA" id="RIMQTRC"/>
<dbReference type="OrthoDB" id="17212at2759"/>
<dbReference type="PhylomeDB" id="Q9XZL8"/>
<dbReference type="SignaLink" id="Q9XZL8"/>
<dbReference type="BioGRID-ORCS" id="47384">
    <property type="hits" value="0 hits in 3 CRISPR screens"/>
</dbReference>
<dbReference type="GenomeRNAi" id="47384"/>
<dbReference type="PRO" id="PR:Q9XZL8"/>
<dbReference type="Proteomes" id="UP000000803">
    <property type="component" value="Chromosome 3R"/>
</dbReference>
<dbReference type="Bgee" id="FBgn0086370">
    <property type="expression patterns" value="Expressed in transmedullary neuron Tm5c (Drosophila) in brain and 215 other cell types or tissues"/>
</dbReference>
<dbReference type="ExpressionAtlas" id="Q9XZL8">
    <property type="expression patterns" value="baseline and differential"/>
</dbReference>
<dbReference type="GO" id="GO:0005737">
    <property type="term" value="C:cytoplasm"/>
    <property type="evidence" value="ECO:0000318"/>
    <property type="project" value="GO_Central"/>
</dbReference>
<dbReference type="GO" id="GO:0005829">
    <property type="term" value="C:cytosol"/>
    <property type="evidence" value="ECO:0000314"/>
    <property type="project" value="FlyBase"/>
</dbReference>
<dbReference type="GO" id="GO:0005759">
    <property type="term" value="C:mitochondrial matrix"/>
    <property type="evidence" value="ECO:0000314"/>
    <property type="project" value="FlyBase"/>
</dbReference>
<dbReference type="GO" id="GO:0005634">
    <property type="term" value="C:nucleus"/>
    <property type="evidence" value="ECO:0000314"/>
    <property type="project" value="FlyBase"/>
</dbReference>
<dbReference type="GO" id="GO:0008597">
    <property type="term" value="F:calcium-dependent protein serine/threonine phosphatase regulator activity"/>
    <property type="evidence" value="ECO:0000250"/>
    <property type="project" value="FlyBase"/>
</dbReference>
<dbReference type="GO" id="GO:0003676">
    <property type="term" value="F:nucleic acid binding"/>
    <property type="evidence" value="ECO:0007669"/>
    <property type="project" value="InterPro"/>
</dbReference>
<dbReference type="GO" id="GO:0141109">
    <property type="term" value="F:transporter activator activity"/>
    <property type="evidence" value="ECO:0000315"/>
    <property type="project" value="FlyBase"/>
</dbReference>
<dbReference type="GO" id="GO:0019722">
    <property type="term" value="P:calcium-mediated signaling"/>
    <property type="evidence" value="ECO:0000318"/>
    <property type="project" value="GO_Central"/>
</dbReference>
<dbReference type="GO" id="GO:0007343">
    <property type="term" value="P:egg activation"/>
    <property type="evidence" value="ECO:0000315"/>
    <property type="project" value="FlyBase"/>
</dbReference>
<dbReference type="GO" id="GO:0007143">
    <property type="term" value="P:female meiotic nuclear division"/>
    <property type="evidence" value="ECO:0000315"/>
    <property type="project" value="FlyBase"/>
</dbReference>
<dbReference type="GO" id="GO:0007616">
    <property type="term" value="P:long-term memory"/>
    <property type="evidence" value="ECO:0000315"/>
    <property type="project" value="FlyBase"/>
</dbReference>
<dbReference type="GO" id="GO:0035039">
    <property type="term" value="P:male pronucleus assembly"/>
    <property type="evidence" value="ECO:0000315"/>
    <property type="project" value="FlyBase"/>
</dbReference>
<dbReference type="GO" id="GO:0051321">
    <property type="term" value="P:meiotic cell cycle"/>
    <property type="evidence" value="ECO:0000316"/>
    <property type="project" value="FlyBase"/>
</dbReference>
<dbReference type="GO" id="GO:0008355">
    <property type="term" value="P:olfactory learning"/>
    <property type="evidence" value="ECO:0000315"/>
    <property type="project" value="FlyBase"/>
</dbReference>
<dbReference type="GO" id="GO:0048477">
    <property type="term" value="P:oogenesis"/>
    <property type="evidence" value="ECO:0007669"/>
    <property type="project" value="UniProtKB-KW"/>
</dbReference>
<dbReference type="GO" id="GO:0035794">
    <property type="term" value="P:positive regulation of mitochondrial membrane permeability"/>
    <property type="evidence" value="ECO:0000315"/>
    <property type="project" value="FlyBase"/>
</dbReference>
<dbReference type="GO" id="GO:0070884">
    <property type="term" value="P:regulation of calcineurin-NFAT signaling cascade"/>
    <property type="evidence" value="ECO:0000315"/>
    <property type="project" value="UniProtKB"/>
</dbReference>
<dbReference type="GO" id="GO:0045924">
    <property type="term" value="P:regulation of female receptivity"/>
    <property type="evidence" value="ECO:0000315"/>
    <property type="project" value="FlyBase"/>
</dbReference>
<dbReference type="GO" id="GO:0046008">
    <property type="term" value="P:regulation of female receptivity, post-mating"/>
    <property type="evidence" value="ECO:0000315"/>
    <property type="project" value="FlyBase"/>
</dbReference>
<dbReference type="GO" id="GO:0030431">
    <property type="term" value="P:sleep"/>
    <property type="evidence" value="ECO:0000314"/>
    <property type="project" value="FlyBase"/>
</dbReference>
<dbReference type="CDD" id="cd12434">
    <property type="entry name" value="RRM_RCAN_like"/>
    <property type="match status" value="1"/>
</dbReference>
<dbReference type="FunFam" id="3.30.70.330:FF:000092">
    <property type="entry name" value="Calcipressin-2 isoform 2"/>
    <property type="match status" value="1"/>
</dbReference>
<dbReference type="Gene3D" id="3.30.70.330">
    <property type="match status" value="1"/>
</dbReference>
<dbReference type="InterPro" id="IPR006931">
    <property type="entry name" value="Calcipressin"/>
</dbReference>
<dbReference type="InterPro" id="IPR012677">
    <property type="entry name" value="Nucleotide-bd_a/b_plait_sf"/>
</dbReference>
<dbReference type="InterPro" id="IPR035979">
    <property type="entry name" value="RBD_domain_sf"/>
</dbReference>
<dbReference type="PANTHER" id="PTHR10300">
    <property type="entry name" value="CALCIPRESSIN"/>
    <property type="match status" value="1"/>
</dbReference>
<dbReference type="PANTHER" id="PTHR10300:SF14">
    <property type="entry name" value="PROTEIN SARAH"/>
    <property type="match status" value="1"/>
</dbReference>
<dbReference type="Pfam" id="PF04847">
    <property type="entry name" value="Calcipressin"/>
    <property type="match status" value="1"/>
</dbReference>
<dbReference type="SUPFAM" id="SSF54928">
    <property type="entry name" value="RNA-binding domain, RBD"/>
    <property type="match status" value="1"/>
</dbReference>